<sequence>MEISGTVLRQVSYVSGYGTHTRSRGLAPRFGVRMGMGSGFCDEGHLRYYQDTKKVLTPKKKLKLLKGFSKLGLASDPEKLAMFYDLQQNLTSDAGDVLLRELEAARAKEKEVKKKRKQEKKAKLKAAKMNCESSSSSSSESSDSDCGCDQVVDMNTFRAGVGVGVGVGVGVVAPAPVEESPLPKTAPIVEDANAHCVAMELCSKNDIYVSSASNGFKNESAVVTSAPQKRIEVCMGNKCKRSGAAALMQEFEKVVGVEGVAVVACKCMGKCKTAPNVKVQNSVDHNSLAQGLDDSVKIPANPLCIGVGLEDVDAIVARYFWESHTDIGMAGAGAATAT</sequence>
<reference key="1">
    <citation type="submission" date="2009-08" db="EMBL/GenBank/DDBJ databases">
        <authorList>
            <person name="Cheung F."/>
            <person name="Xiao Y."/>
            <person name="Chan A."/>
            <person name="Moskal W."/>
            <person name="Town C.D."/>
        </authorList>
    </citation>
    <scope>NUCLEOTIDE SEQUENCE [MRNA] (ISOFORMS 1 AND 2)</scope>
</reference>
<reference key="2">
    <citation type="journal article" date="2010" name="Nature">
        <title>Genome sequence of the palaeopolyploid soybean.</title>
        <authorList>
            <person name="Schmutz J."/>
            <person name="Cannon S.B."/>
            <person name="Schlueter J."/>
            <person name="Ma J."/>
            <person name="Mitros T."/>
            <person name="Nelson W."/>
            <person name="Hyten D.L."/>
            <person name="Song Q."/>
            <person name="Thelen J.J."/>
            <person name="Cheng J."/>
            <person name="Xu D."/>
            <person name="Hellsten U."/>
            <person name="May G.D."/>
            <person name="Yu Y."/>
            <person name="Sakurai T."/>
            <person name="Umezawa T."/>
            <person name="Bhattacharyya M.K."/>
            <person name="Sandhu D."/>
            <person name="Valliyodan B."/>
            <person name="Lindquist E."/>
            <person name="Peto M."/>
            <person name="Grant D."/>
            <person name="Shu S."/>
            <person name="Goodstein D."/>
            <person name="Barry K."/>
            <person name="Futrell-Griggs M."/>
            <person name="Abernathy B."/>
            <person name="Du J."/>
            <person name="Tian Z."/>
            <person name="Zhu L."/>
            <person name="Gill N."/>
            <person name="Joshi T."/>
            <person name="Libault M."/>
            <person name="Sethuraman A."/>
            <person name="Zhang X.-C."/>
            <person name="Shinozaki K."/>
            <person name="Nguyen H.T."/>
            <person name="Wing R.A."/>
            <person name="Cregan P."/>
            <person name="Specht J."/>
            <person name="Grimwood J."/>
            <person name="Rokhsar D."/>
            <person name="Stacey G."/>
            <person name="Shoemaker R.C."/>
            <person name="Jackson S.A."/>
        </authorList>
    </citation>
    <scope>NUCLEOTIDE SEQUENCE [LARGE SCALE GENOMIC DNA]</scope>
    <source>
        <strain>cv. Williams 82</strain>
        <tissue>Callus</tissue>
    </source>
</reference>
<reference key="3">
    <citation type="journal article" date="2022" name="Front. Plant Sci.">
        <title>Functional characterization of soybean diacylglycerol acyltransferase 3 in yeast and soybean.</title>
        <authorList>
            <person name="Xue J."/>
            <person name="Gao H."/>
            <person name="Xue Y."/>
            <person name="Shi R."/>
            <person name="Liu M."/>
            <person name="Han L."/>
            <person name="Gao Y."/>
            <person name="Zhou Y."/>
            <person name="Zhang F."/>
            <person name="Zhang H."/>
            <person name="Jia X."/>
            <person name="Li R."/>
        </authorList>
    </citation>
    <scope>FUNCTION</scope>
    <scope>CATALYTIC ACTIVITY</scope>
    <scope>TISSUE SPECIFICITY</scope>
    <scope>DEVELOPMENTAL STAGE</scope>
    <scope>SUBCELLULAR LOCATION</scope>
    <scope>PATHWAY</scope>
    <source>
        <strain>cv. Jack</strain>
    </source>
</reference>
<comment type="function">
    <text evidence="3">Involved in triacylglycerol (TAG) biosynthesis (PubMed:35693158). Catalyzes the acylation of the sn-3 hydroxy group of sn-1,2-diacylglycerol using acyl-CoA (PubMed:35693158). Incorporates preferentially monounsaturated fatty acids (MUFAs), especially oleic acid (C18:1) and to some extent palmitoleic acid (C16:1), into TAGs accumulating in seeds oil (PubMed:35693158). Can also use, with low efficiency, hexadecanoic acid (C16:0), linoleic acid (C18:2) and linolenic acid (C18:3) as acyl-CoA substrates (PubMed:35693158).</text>
</comment>
<comment type="catalytic activity">
    <reaction evidence="3">
        <text>an acyl-CoA + a 1,2-diacyl-sn-glycerol = a triacyl-sn-glycerol + CoA</text>
        <dbReference type="Rhea" id="RHEA:10868"/>
        <dbReference type="ChEBI" id="CHEBI:17815"/>
        <dbReference type="ChEBI" id="CHEBI:57287"/>
        <dbReference type="ChEBI" id="CHEBI:58342"/>
        <dbReference type="ChEBI" id="CHEBI:64615"/>
        <dbReference type="EC" id="2.3.1.20"/>
    </reaction>
</comment>
<comment type="cofactor">
    <cofactor evidence="1">
        <name>[2Fe-2S] cluster</name>
        <dbReference type="ChEBI" id="CHEBI:190135"/>
    </cofactor>
</comment>
<comment type="pathway">
    <text evidence="3">Glycerolipid metabolism; triacylglycerol biosynthesis.</text>
</comment>
<comment type="subcellular location">
    <subcellularLocation>
        <location evidence="3">Cytoplasm</location>
    </subcellularLocation>
</comment>
<comment type="alternative products">
    <event type="alternative splicing"/>
    <isoform>
        <id>I1MRZ6-1</id>
        <name>1</name>
        <sequence type="displayed"/>
    </isoform>
    <isoform>
        <id>I1MRZ6-2</id>
        <name>2</name>
        <sequence type="described" ref="VSP_061851"/>
    </isoform>
</comment>
<comment type="tissue specificity">
    <text evidence="3">Mostly expressed in flowers, accumulates in stems, seeds and pods and, to a lower extent, in leaves and roots.</text>
</comment>
<comment type="developmental stage">
    <text evidence="3">During seed development, highly expressed from 35 to 55 days, the period of fast increase of seed oil accumulation.</text>
</comment>
<comment type="similarity">
    <text evidence="5">Belongs to the diacylglycerol acyltransferase family.</text>
</comment>
<comment type="sequence caution" evidence="5">
    <conflict type="erroneous initiation">
        <sequence resource="EMBL-CDS" id="ACU13369"/>
    </conflict>
    <text>Truncated N-terminus.</text>
</comment>
<proteinExistence type="evidence at protein level"/>
<accession>I1MRZ6</accession>
<accession>C6SVU6</accession>
<accession>C6T4S2</accession>
<protein>
    <recommendedName>
        <fullName evidence="4">Diacylglycerol O-acyltransferase 3-2</fullName>
        <shortName evidence="4">GmDGAT3-2</shortName>
        <ecNumber evidence="3">2.3.1.20</ecNumber>
    </recommendedName>
</protein>
<name>DAT32_SOYBN</name>
<gene>
    <name evidence="4" type="primary">DGAT3-2</name>
    <name evidence="6" type="ORF">GLYMA_17G041600</name>
</gene>
<dbReference type="EC" id="2.3.1.20" evidence="3"/>
<dbReference type="EMBL" id="BT089289">
    <property type="protein sequence ID" value="ACU13369.1"/>
    <property type="status" value="ALT_INIT"/>
    <property type="molecule type" value="mRNA"/>
</dbReference>
<dbReference type="EMBL" id="BT092433">
    <property type="protein sequence ID" value="ACU16693.1"/>
    <property type="molecule type" value="mRNA"/>
</dbReference>
<dbReference type="EMBL" id="CM000850">
    <property type="protein sequence ID" value="KRH02489.1"/>
    <property type="molecule type" value="Genomic_DNA"/>
</dbReference>
<dbReference type="RefSeq" id="NP_001238233.1">
    <property type="nucleotide sequence ID" value="NM_001251304.2"/>
</dbReference>
<dbReference type="RefSeq" id="XP_006600153.1">
    <property type="nucleotide sequence ID" value="XM_006600090.2"/>
</dbReference>
<dbReference type="SMR" id="I1MRZ6"/>
<dbReference type="FunCoup" id="I1MRZ6">
    <property type="interactions" value="301"/>
</dbReference>
<dbReference type="STRING" id="3847.I1MRZ6"/>
<dbReference type="PaxDb" id="3847-GLYMA17G04650.1"/>
<dbReference type="EnsemblPlants" id="KRH02489">
    <molecule id="I1MRZ6-1"/>
    <property type="protein sequence ID" value="KRH02489"/>
    <property type="gene ID" value="GLYMA_17G041600"/>
</dbReference>
<dbReference type="Gramene" id="KRH02489">
    <molecule id="I1MRZ6-1"/>
    <property type="protein sequence ID" value="KRH02489"/>
    <property type="gene ID" value="GLYMA_17G041600"/>
</dbReference>
<dbReference type="eggNOG" id="ENOG502RS12">
    <property type="taxonomic scope" value="Eukaryota"/>
</dbReference>
<dbReference type="HOGENOM" id="CLU_065888_0_0_1"/>
<dbReference type="InParanoid" id="I1MRZ6"/>
<dbReference type="OMA" id="AVACKCM"/>
<dbReference type="OrthoDB" id="913780at2759"/>
<dbReference type="BRENDA" id="2.3.1.20">
    <property type="organism ID" value="2483"/>
</dbReference>
<dbReference type="UniPathway" id="UPA00282"/>
<dbReference type="Proteomes" id="UP000008827">
    <property type="component" value="Chromosome 17"/>
</dbReference>
<dbReference type="ExpressionAtlas" id="I1MRZ6">
    <property type="expression patterns" value="baseline and differential"/>
</dbReference>
<dbReference type="GO" id="GO:0005737">
    <property type="term" value="C:cytoplasm"/>
    <property type="evidence" value="ECO:0000314"/>
    <property type="project" value="UniProtKB"/>
</dbReference>
<dbReference type="GO" id="GO:0004144">
    <property type="term" value="F:diacylglycerol O-acyltransferase activity"/>
    <property type="evidence" value="ECO:0000315"/>
    <property type="project" value="UniProtKB"/>
</dbReference>
<dbReference type="GO" id="GO:0051536">
    <property type="term" value="F:iron-sulfur cluster binding"/>
    <property type="evidence" value="ECO:0007669"/>
    <property type="project" value="UniProtKB-KW"/>
</dbReference>
<dbReference type="GO" id="GO:0046872">
    <property type="term" value="F:metal ion binding"/>
    <property type="evidence" value="ECO:0007669"/>
    <property type="project" value="UniProtKB-KW"/>
</dbReference>
<dbReference type="GO" id="GO:0006629">
    <property type="term" value="P:lipid metabolic process"/>
    <property type="evidence" value="ECO:0000315"/>
    <property type="project" value="UniProtKB"/>
</dbReference>
<dbReference type="GO" id="GO:0019432">
    <property type="term" value="P:triglyceride biosynthetic process"/>
    <property type="evidence" value="ECO:0000315"/>
    <property type="project" value="UniProtKB"/>
</dbReference>
<dbReference type="CDD" id="cd02980">
    <property type="entry name" value="TRX_Fd_family"/>
    <property type="match status" value="1"/>
</dbReference>
<dbReference type="Gene3D" id="3.40.30.10">
    <property type="entry name" value="Glutaredoxin"/>
    <property type="match status" value="1"/>
</dbReference>
<dbReference type="InterPro" id="IPR036249">
    <property type="entry name" value="Thioredoxin-like_sf"/>
</dbReference>
<dbReference type="SUPFAM" id="SSF52833">
    <property type="entry name" value="Thioredoxin-like"/>
    <property type="match status" value="1"/>
</dbReference>
<feature type="chain" id="PRO_0000457897" description="Diacylglycerol O-acyltransferase 3-2">
    <location>
        <begin position="1"/>
        <end position="338"/>
    </location>
</feature>
<feature type="region of interest" description="Disordered" evidence="2">
    <location>
        <begin position="109"/>
        <end position="145"/>
    </location>
</feature>
<feature type="compositionally biased region" description="Basic residues" evidence="2">
    <location>
        <begin position="113"/>
        <end position="126"/>
    </location>
</feature>
<feature type="compositionally biased region" description="Low complexity" evidence="2">
    <location>
        <begin position="132"/>
        <end position="145"/>
    </location>
</feature>
<feature type="binding site" evidence="1">
    <location>
        <position position="234"/>
    </location>
    <ligand>
        <name>[2Fe-2S] cluster</name>
        <dbReference type="ChEBI" id="CHEBI:190135"/>
    </ligand>
</feature>
<feature type="binding site" evidence="1">
    <location>
        <position position="239"/>
    </location>
    <ligand>
        <name>[2Fe-2S] cluster</name>
        <dbReference type="ChEBI" id="CHEBI:190135"/>
    </ligand>
</feature>
<feature type="binding site" evidence="1">
    <location>
        <position position="267"/>
    </location>
    <ligand>
        <name>[2Fe-2S] cluster</name>
        <dbReference type="ChEBI" id="CHEBI:190135"/>
    </ligand>
</feature>
<feature type="binding site" evidence="1">
    <location>
        <position position="271"/>
    </location>
    <ligand>
        <name>[2Fe-2S] cluster</name>
        <dbReference type="ChEBI" id="CHEBI:190135"/>
    </ligand>
</feature>
<feature type="splice variant" id="VSP_061851" description="In isoform 2.">
    <location>
        <begin position="168"/>
        <end position="330"/>
    </location>
</feature>
<feature type="sequence conflict" description="In Ref. 1; ACU16693." evidence="5" ref="1">
    <original>K</original>
    <variation>R</variation>
    <location>
        <position position="61"/>
    </location>
</feature>
<feature type="sequence conflict" description="In Ref. 1; ACU13369." evidence="5" ref="1">
    <original>C</original>
    <variation>Y</variation>
    <location>
        <position position="271"/>
    </location>
</feature>
<feature type="sequence conflict" description="In Ref. 1; ACU13369." evidence="5" ref="1">
    <original>G</original>
    <variation>D</variation>
    <location>
        <position position="328"/>
    </location>
</feature>
<organism>
    <name type="scientific">Glycine max</name>
    <name type="common">Soybean</name>
    <name type="synonym">Glycine hispida</name>
    <dbReference type="NCBI Taxonomy" id="3847"/>
    <lineage>
        <taxon>Eukaryota</taxon>
        <taxon>Viridiplantae</taxon>
        <taxon>Streptophyta</taxon>
        <taxon>Embryophyta</taxon>
        <taxon>Tracheophyta</taxon>
        <taxon>Spermatophyta</taxon>
        <taxon>Magnoliopsida</taxon>
        <taxon>eudicotyledons</taxon>
        <taxon>Gunneridae</taxon>
        <taxon>Pentapetalae</taxon>
        <taxon>rosids</taxon>
        <taxon>fabids</taxon>
        <taxon>Fabales</taxon>
        <taxon>Fabaceae</taxon>
        <taxon>Papilionoideae</taxon>
        <taxon>50 kb inversion clade</taxon>
        <taxon>NPAAA clade</taxon>
        <taxon>indigoferoid/millettioid clade</taxon>
        <taxon>Phaseoleae</taxon>
        <taxon>Glycine</taxon>
        <taxon>Glycine subgen. Soja</taxon>
    </lineage>
</organism>
<keyword id="KW-0025">Alternative splicing</keyword>
<keyword id="KW-0963">Cytoplasm</keyword>
<keyword id="KW-0408">Iron</keyword>
<keyword id="KW-0411">Iron-sulfur</keyword>
<keyword id="KW-0479">Metal-binding</keyword>
<keyword id="KW-1185">Reference proteome</keyword>
<keyword id="KW-0808">Transferase</keyword>
<evidence type="ECO:0000250" key="1">
    <source>
        <dbReference type="UniProtKB" id="Q9C5W0"/>
    </source>
</evidence>
<evidence type="ECO:0000256" key="2">
    <source>
        <dbReference type="SAM" id="MobiDB-lite"/>
    </source>
</evidence>
<evidence type="ECO:0000269" key="3">
    <source>
    </source>
</evidence>
<evidence type="ECO:0000303" key="4">
    <source>
    </source>
</evidence>
<evidence type="ECO:0000305" key="5"/>
<evidence type="ECO:0000312" key="6">
    <source>
        <dbReference type="EMBL" id="KRH02489.1"/>
    </source>
</evidence>